<reference key="1">
    <citation type="journal article" date="2009" name="PLoS Genet.">
        <title>Organised genome dynamics in the Escherichia coli species results in highly diverse adaptive paths.</title>
        <authorList>
            <person name="Touchon M."/>
            <person name="Hoede C."/>
            <person name="Tenaillon O."/>
            <person name="Barbe V."/>
            <person name="Baeriswyl S."/>
            <person name="Bidet P."/>
            <person name="Bingen E."/>
            <person name="Bonacorsi S."/>
            <person name="Bouchier C."/>
            <person name="Bouvet O."/>
            <person name="Calteau A."/>
            <person name="Chiapello H."/>
            <person name="Clermont O."/>
            <person name="Cruveiller S."/>
            <person name="Danchin A."/>
            <person name="Diard M."/>
            <person name="Dossat C."/>
            <person name="Karoui M.E."/>
            <person name="Frapy E."/>
            <person name="Garry L."/>
            <person name="Ghigo J.M."/>
            <person name="Gilles A.M."/>
            <person name="Johnson J."/>
            <person name="Le Bouguenec C."/>
            <person name="Lescat M."/>
            <person name="Mangenot S."/>
            <person name="Martinez-Jehanne V."/>
            <person name="Matic I."/>
            <person name="Nassif X."/>
            <person name="Oztas S."/>
            <person name="Petit M.A."/>
            <person name="Pichon C."/>
            <person name="Rouy Z."/>
            <person name="Ruf C.S."/>
            <person name="Schneider D."/>
            <person name="Tourret J."/>
            <person name="Vacherie B."/>
            <person name="Vallenet D."/>
            <person name="Medigue C."/>
            <person name="Rocha E.P.C."/>
            <person name="Denamur E."/>
        </authorList>
    </citation>
    <scope>NUCLEOTIDE SEQUENCE [LARGE SCALE GENOMIC DNA]</scope>
    <source>
        <strain>ED1a</strain>
    </source>
</reference>
<comment type="function">
    <text evidence="2">Displays esterase activity towards short chain fatty esters (acyl chain length of up to 8 carbons). Able to hydrolyze triacetylglycerol (triacetin) and tributyrylglycerol (tributyrin), but not trioleylglycerol (triolein) or cholesterol oleate. Negatively regulates MalT activity by antagonizing maltotriose binding. Inhibits MelA galactosidase activity.</text>
</comment>
<comment type="subunit">
    <text evidence="2">Homodimer. Interacts with MalT and MelA.</text>
</comment>
<comment type="subcellular location">
    <subcellularLocation>
        <location evidence="2">Cytoplasm</location>
    </subcellularLocation>
</comment>
<comment type="similarity">
    <text evidence="2">Belongs to the 'GDXG' lipolytic enzyme family.</text>
</comment>
<sequence length="319" mass="36176">MKPENKLPVLDLISAEMKTVVNTLQPDLPPWPATGTIAEQRQYYTLERRFWNVSAPEMATRAYRVPTKYGQVKTRIFYPQPDSPATLFYLHGGGFILGNLDTHDRIMRLLASYSQCTVIGIDYTLSPEARFPQAIEEIVAACCYFHQQAEDYQINMSRIGFAGDSAGAMLALASALWLRDKQIDCGKVAGVLLWYGLYGLRDSVTRRLLGGVWDGLTQQDLQMYEEAYLSNDADRESPYYCLFNNDLTREVPPCFIAGAEFDPLLDDSRLLYQTLAAHQQPCEFKLYPGTLHAFLHYSRMMKTADEALRDGAQFFTAQL</sequence>
<dbReference type="EC" id="3.1.1.-" evidence="2"/>
<dbReference type="EMBL" id="CU928162">
    <property type="protein sequence ID" value="CAR06709.1"/>
    <property type="molecule type" value="Genomic_DNA"/>
</dbReference>
<dbReference type="RefSeq" id="WP_000801826.1">
    <property type="nucleotide sequence ID" value="NC_011745.1"/>
</dbReference>
<dbReference type="SMR" id="B7MQJ1"/>
<dbReference type="ESTHER" id="ecoli-Aes">
    <property type="family name" value="Acetyl_esterase"/>
</dbReference>
<dbReference type="MEROPS" id="S09.A47"/>
<dbReference type="KEGG" id="ecq:ECED1_0499"/>
<dbReference type="HOGENOM" id="CLU_012494_6_4_6"/>
<dbReference type="Proteomes" id="UP000000748">
    <property type="component" value="Chromosome"/>
</dbReference>
<dbReference type="GO" id="GO:0005737">
    <property type="term" value="C:cytoplasm"/>
    <property type="evidence" value="ECO:0007669"/>
    <property type="project" value="UniProtKB-SubCell"/>
</dbReference>
<dbReference type="GO" id="GO:0052689">
    <property type="term" value="F:carboxylic ester hydrolase activity"/>
    <property type="evidence" value="ECO:0007669"/>
    <property type="project" value="UniProtKB-UniRule"/>
</dbReference>
<dbReference type="FunFam" id="3.40.50.1820:FF:000035">
    <property type="entry name" value="Acetyl esterase"/>
    <property type="match status" value="1"/>
</dbReference>
<dbReference type="Gene3D" id="3.40.50.1820">
    <property type="entry name" value="alpha/beta hydrolase"/>
    <property type="match status" value="1"/>
</dbReference>
<dbReference type="HAMAP" id="MF_01958">
    <property type="entry name" value="Acetyl_esterase"/>
    <property type="match status" value="1"/>
</dbReference>
<dbReference type="InterPro" id="IPR013094">
    <property type="entry name" value="AB_hydrolase_3"/>
</dbReference>
<dbReference type="InterPro" id="IPR029058">
    <property type="entry name" value="AB_hydrolase_fold"/>
</dbReference>
<dbReference type="InterPro" id="IPR023508">
    <property type="entry name" value="Acetyl_esterase"/>
</dbReference>
<dbReference type="InterPro" id="IPR050300">
    <property type="entry name" value="GDXG_lipolytic_enzyme"/>
</dbReference>
<dbReference type="InterPro" id="IPR002168">
    <property type="entry name" value="Lipase_GDXG_HIS_AS"/>
</dbReference>
<dbReference type="InterPro" id="IPR033140">
    <property type="entry name" value="Lipase_GDXG_put_SER_AS"/>
</dbReference>
<dbReference type="NCBIfam" id="NF007547">
    <property type="entry name" value="PRK10162.1"/>
    <property type="match status" value="1"/>
</dbReference>
<dbReference type="PANTHER" id="PTHR48081">
    <property type="entry name" value="AB HYDROLASE SUPERFAMILY PROTEIN C4A8.06C"/>
    <property type="match status" value="1"/>
</dbReference>
<dbReference type="PANTHER" id="PTHR48081:SF8">
    <property type="entry name" value="ALPHA_BETA HYDROLASE FOLD-3 DOMAIN-CONTAINING PROTEIN-RELATED"/>
    <property type="match status" value="1"/>
</dbReference>
<dbReference type="Pfam" id="PF07859">
    <property type="entry name" value="Abhydrolase_3"/>
    <property type="match status" value="1"/>
</dbReference>
<dbReference type="SUPFAM" id="SSF53474">
    <property type="entry name" value="alpha/beta-Hydrolases"/>
    <property type="match status" value="1"/>
</dbReference>
<dbReference type="PROSITE" id="PS01173">
    <property type="entry name" value="LIPASE_GDXG_HIS"/>
    <property type="match status" value="1"/>
</dbReference>
<dbReference type="PROSITE" id="PS01174">
    <property type="entry name" value="LIPASE_GDXG_SER"/>
    <property type="match status" value="1"/>
</dbReference>
<organism>
    <name type="scientific">Escherichia coli O81 (strain ED1a)</name>
    <dbReference type="NCBI Taxonomy" id="585397"/>
    <lineage>
        <taxon>Bacteria</taxon>
        <taxon>Pseudomonadati</taxon>
        <taxon>Pseudomonadota</taxon>
        <taxon>Gammaproteobacteria</taxon>
        <taxon>Enterobacterales</taxon>
        <taxon>Enterobacteriaceae</taxon>
        <taxon>Escherichia</taxon>
    </lineage>
</organism>
<name>AES_ECO81</name>
<accession>B7MQJ1</accession>
<feature type="chain" id="PRO_1000188980" description="Acetyl esterase">
    <location>
        <begin position="1"/>
        <end position="319"/>
    </location>
</feature>
<feature type="short sequence motif" description="Involved in the stabilization of the negatively charged intermediate by the formation of the oxyanion hole" evidence="1">
    <location>
        <begin position="91"/>
        <end position="93"/>
    </location>
</feature>
<feature type="active site" evidence="2">
    <location>
        <position position="165"/>
    </location>
</feature>
<feature type="active site" evidence="2">
    <location>
        <position position="262"/>
    </location>
</feature>
<feature type="active site" evidence="2">
    <location>
        <position position="292"/>
    </location>
</feature>
<protein>
    <recommendedName>
        <fullName evidence="2">Acetyl esterase</fullName>
        <ecNumber evidence="2">3.1.1.-</ecNumber>
    </recommendedName>
</protein>
<evidence type="ECO:0000250" key="1">
    <source>
        <dbReference type="UniProtKB" id="Q5NUF3"/>
    </source>
</evidence>
<evidence type="ECO:0000255" key="2">
    <source>
        <dbReference type="HAMAP-Rule" id="MF_01958"/>
    </source>
</evidence>
<gene>
    <name evidence="2" type="primary">aes</name>
    <name type="ordered locus">ECED1_0499</name>
</gene>
<proteinExistence type="inferred from homology"/>
<keyword id="KW-0963">Cytoplasm</keyword>
<keyword id="KW-0378">Hydrolase</keyword>
<keyword id="KW-0719">Serine esterase</keyword>